<comment type="function">
    <text evidence="1">IGPS catalyzes the conversion of PRFAR and glutamine to IGP, AICAR and glutamate. The glutaminase domain produces the ammonia necessary for the cyclase domain to produce IGP and AICAR from PRFAR. The ammonia is channeled to the active site of the cyclase domain.</text>
</comment>
<comment type="catalytic activity">
    <reaction>
        <text>5-[(5-phospho-1-deoxy-D-ribulos-1-ylimino)methylamino]-1-(5-phospho-beta-D-ribosyl)imidazole-4-carboxamide + L-glutamine = D-erythro-1-(imidazol-4-yl)glycerol 3-phosphate + 5-amino-1-(5-phospho-beta-D-ribosyl)imidazole-4-carboxamide + L-glutamate + H(+)</text>
        <dbReference type="Rhea" id="RHEA:24793"/>
        <dbReference type="ChEBI" id="CHEBI:15378"/>
        <dbReference type="ChEBI" id="CHEBI:29985"/>
        <dbReference type="ChEBI" id="CHEBI:58278"/>
        <dbReference type="ChEBI" id="CHEBI:58359"/>
        <dbReference type="ChEBI" id="CHEBI:58475"/>
        <dbReference type="ChEBI" id="CHEBI:58525"/>
        <dbReference type="EC" id="4.3.2.10"/>
    </reaction>
</comment>
<comment type="catalytic activity">
    <reaction>
        <text>L-glutamine + H2O = L-glutamate + NH4(+)</text>
        <dbReference type="Rhea" id="RHEA:15889"/>
        <dbReference type="ChEBI" id="CHEBI:15377"/>
        <dbReference type="ChEBI" id="CHEBI:28938"/>
        <dbReference type="ChEBI" id="CHEBI:29985"/>
        <dbReference type="ChEBI" id="CHEBI:58359"/>
        <dbReference type="EC" id="3.5.1.2"/>
    </reaction>
</comment>
<comment type="pathway">
    <text>Amino-acid biosynthesis; L-histidine biosynthesis; L-histidine from 5-phospho-alpha-D-ribose 1-diphosphate: step 5/9.</text>
</comment>
<comment type="similarity">
    <text evidence="3">In the C-terminal section; belongs to the HisA/HisF family.</text>
</comment>
<proteinExistence type="inferred from homology"/>
<feature type="chain" id="PRO_0000152475" description="Imidazole glycerol phosphate synthase hisHF">
    <location>
        <begin position="1"/>
        <end position="541"/>
    </location>
</feature>
<feature type="domain" description="Glutamine amidotransferase type-1">
    <location>
        <begin position="2"/>
        <end position="214"/>
    </location>
</feature>
<feature type="region of interest" description="Cyclase">
    <location>
        <begin position="228"/>
        <end position="541"/>
    </location>
</feature>
<feature type="active site" description="For GATase activity" evidence="1">
    <location>
        <position position="80"/>
    </location>
</feature>
<feature type="active site" description="For GATase activity" evidence="1">
    <location>
        <position position="189"/>
    </location>
</feature>
<feature type="active site" description="For GATase activity" evidence="1">
    <location>
        <position position="191"/>
    </location>
</feature>
<feature type="active site" evidence="2">
    <location>
        <position position="237"/>
    </location>
</feature>
<feature type="active site" evidence="2">
    <location>
        <position position="396"/>
    </location>
</feature>
<gene>
    <name type="primary">his4</name>
    <name type="ORF">SPBC418.01c</name>
    <name type="ORF">SPBC887.20c</name>
</gene>
<sequence>MIVSIVDYGSGNVRSLINAVRYLGFETQWIRNPHDIEKAECLIFPGVGNFGFVCDSLAKQGFLEPLRRYALSGKPFMAVCVGIQALFEGSVEAPHSKGLGVFPGLVQRFDNDDKTVPHIGWNSCAVRSDTSKEFFGMRPHDKFYFVHSYMIPEKGLILPPEFKIATTKYGNETFVGAIVKNNFLATQFHPEKSGSAGLRCLKAFLTGNYEQPISGEASKLIENSFGGLTKRIIACLDVRSNDAGDLVVTKGDQYDVREKSSGSEVRNLGKPVELCQRYFQEGADEVVFLNITSFRNCPMADAPMLQVLEKAAQTVFVPLTVGGGIRDVSDPDGTFHPAVEVAGIYFRSGADKVSIGSDAVYAAEKYYENGKKLSGKTAIETISKAYGNQAVVISVDPKRQYVKVPEDTKHHVVKTSRLGPNGEAYCWYQCTVKGGREYRDIDVVELTRACEAMGAGEVLLNCMDQDGSNAGYDIELVRLVKNSVNIPVIASSGAGIPQHFEEVFKETDCDAALAAGIFHRQTCRIEDVKEYLAIHDVLVRT</sequence>
<keyword id="KW-0028">Amino-acid biosynthesis</keyword>
<keyword id="KW-0315">Glutamine amidotransferase</keyword>
<keyword id="KW-0368">Histidine biosynthesis</keyword>
<keyword id="KW-0378">Hydrolase</keyword>
<keyword id="KW-0456">Lyase</keyword>
<keyword id="KW-0511">Multifunctional enzyme</keyword>
<keyword id="KW-1185">Reference proteome</keyword>
<dbReference type="EC" id="4.3.2.10"/>
<dbReference type="EC" id="3.5.1.2"/>
<dbReference type="EMBL" id="CU329671">
    <property type="protein sequence ID" value="CAA21905.3"/>
    <property type="molecule type" value="Genomic_DNA"/>
</dbReference>
<dbReference type="PIR" id="T40745">
    <property type="entry name" value="T40745"/>
</dbReference>
<dbReference type="RefSeq" id="NP_596494.2">
    <property type="nucleotide sequence ID" value="NM_001022414.2"/>
</dbReference>
<dbReference type="SMR" id="O94303"/>
<dbReference type="BioGRID" id="277738">
    <property type="interactions" value="2"/>
</dbReference>
<dbReference type="FunCoup" id="O94303">
    <property type="interactions" value="154"/>
</dbReference>
<dbReference type="STRING" id="284812.O94303"/>
<dbReference type="iPTMnet" id="O94303"/>
<dbReference type="PaxDb" id="4896-SPBC418.01c.1"/>
<dbReference type="EnsemblFungi" id="SPBC418.01c.1">
    <property type="protein sequence ID" value="SPBC418.01c.1:pep"/>
    <property type="gene ID" value="SPBC418.01c"/>
</dbReference>
<dbReference type="GeneID" id="2541224"/>
<dbReference type="KEGG" id="spo:2541224"/>
<dbReference type="PomBase" id="SPBC418.01c">
    <property type="gene designation" value="his4"/>
</dbReference>
<dbReference type="VEuPathDB" id="FungiDB:SPBC418.01c"/>
<dbReference type="eggNOG" id="KOG0623">
    <property type="taxonomic scope" value="Eukaryota"/>
</dbReference>
<dbReference type="HOGENOM" id="CLU_037550_0_0_1"/>
<dbReference type="InParanoid" id="O94303"/>
<dbReference type="OMA" id="GNYGHFV"/>
<dbReference type="PhylomeDB" id="O94303"/>
<dbReference type="UniPathway" id="UPA00031">
    <property type="reaction ID" value="UER00010"/>
</dbReference>
<dbReference type="PRO" id="PR:O94303"/>
<dbReference type="Proteomes" id="UP000002485">
    <property type="component" value="Chromosome II"/>
</dbReference>
<dbReference type="GO" id="GO:0005829">
    <property type="term" value="C:cytosol"/>
    <property type="evidence" value="ECO:0007005"/>
    <property type="project" value="PomBase"/>
</dbReference>
<dbReference type="GO" id="GO:0005634">
    <property type="term" value="C:nucleus"/>
    <property type="evidence" value="ECO:0007005"/>
    <property type="project" value="PomBase"/>
</dbReference>
<dbReference type="GO" id="GO:0004359">
    <property type="term" value="F:glutaminase activity"/>
    <property type="evidence" value="ECO:0007669"/>
    <property type="project" value="UniProtKB-EC"/>
</dbReference>
<dbReference type="GO" id="GO:0000107">
    <property type="term" value="F:imidazoleglycerol-phosphate synthase activity"/>
    <property type="evidence" value="ECO:0000318"/>
    <property type="project" value="GO_Central"/>
</dbReference>
<dbReference type="GO" id="GO:0016829">
    <property type="term" value="F:lyase activity"/>
    <property type="evidence" value="ECO:0007669"/>
    <property type="project" value="UniProtKB-KW"/>
</dbReference>
<dbReference type="GO" id="GO:0000105">
    <property type="term" value="P:L-histidine biosynthetic process"/>
    <property type="evidence" value="ECO:0007669"/>
    <property type="project" value="UniProtKB-UniPathway"/>
</dbReference>
<dbReference type="CDD" id="cd01748">
    <property type="entry name" value="GATase1_IGP_Synthase"/>
    <property type="match status" value="1"/>
</dbReference>
<dbReference type="CDD" id="cd04731">
    <property type="entry name" value="HisF"/>
    <property type="match status" value="1"/>
</dbReference>
<dbReference type="FunFam" id="3.20.20.70:FF:000094">
    <property type="entry name" value="Imidazole glycerol phosphate synthase hisHF"/>
    <property type="match status" value="1"/>
</dbReference>
<dbReference type="FunFam" id="3.40.50.880:FF:000039">
    <property type="entry name" value="Imidazole glycerol phosphate synthase hisHF"/>
    <property type="match status" value="1"/>
</dbReference>
<dbReference type="Gene3D" id="3.40.50.880">
    <property type="match status" value="1"/>
</dbReference>
<dbReference type="Gene3D" id="3.20.20.70">
    <property type="entry name" value="Aldolase class I"/>
    <property type="match status" value="1"/>
</dbReference>
<dbReference type="HAMAP" id="MF_00278">
    <property type="entry name" value="HisH"/>
    <property type="match status" value="1"/>
</dbReference>
<dbReference type="InterPro" id="IPR013785">
    <property type="entry name" value="Aldolase_TIM"/>
</dbReference>
<dbReference type="InterPro" id="IPR029062">
    <property type="entry name" value="Class_I_gatase-like"/>
</dbReference>
<dbReference type="InterPro" id="IPR017926">
    <property type="entry name" value="GATASE"/>
</dbReference>
<dbReference type="InterPro" id="IPR006062">
    <property type="entry name" value="His_biosynth"/>
</dbReference>
<dbReference type="InterPro" id="IPR004651">
    <property type="entry name" value="HisF"/>
</dbReference>
<dbReference type="InterPro" id="IPR050064">
    <property type="entry name" value="IGPS_HisA/HisF"/>
</dbReference>
<dbReference type="InterPro" id="IPR014640">
    <property type="entry name" value="IGPS_HisHF"/>
</dbReference>
<dbReference type="InterPro" id="IPR010139">
    <property type="entry name" value="Imidazole-glycPsynth_HisH"/>
</dbReference>
<dbReference type="InterPro" id="IPR011060">
    <property type="entry name" value="RibuloseP-bd_barrel"/>
</dbReference>
<dbReference type="NCBIfam" id="TIGR00735">
    <property type="entry name" value="hisF"/>
    <property type="match status" value="1"/>
</dbReference>
<dbReference type="NCBIfam" id="TIGR01855">
    <property type="entry name" value="IMP_synth_hisH"/>
    <property type="match status" value="1"/>
</dbReference>
<dbReference type="PANTHER" id="PTHR21235:SF2">
    <property type="entry name" value="IMIDAZOLE GLYCEROL PHOSPHATE SYNTHASE HISHF"/>
    <property type="match status" value="1"/>
</dbReference>
<dbReference type="PANTHER" id="PTHR21235">
    <property type="entry name" value="IMIDAZOLE GLYCEROL PHOSPHATE SYNTHASE SUBUNIT HISF/H IGP SYNTHASE SUBUNIT HISF/H"/>
    <property type="match status" value="1"/>
</dbReference>
<dbReference type="Pfam" id="PF00117">
    <property type="entry name" value="GATase"/>
    <property type="match status" value="1"/>
</dbReference>
<dbReference type="Pfam" id="PF00977">
    <property type="entry name" value="His_biosynth"/>
    <property type="match status" value="1"/>
</dbReference>
<dbReference type="PIRSF" id="PIRSF036936">
    <property type="entry name" value="IGPS_HisHF"/>
    <property type="match status" value="1"/>
</dbReference>
<dbReference type="SUPFAM" id="SSF52317">
    <property type="entry name" value="Class I glutamine amidotransferase-like"/>
    <property type="match status" value="1"/>
</dbReference>
<dbReference type="SUPFAM" id="SSF51366">
    <property type="entry name" value="Ribulose-phoshate binding barrel"/>
    <property type="match status" value="1"/>
</dbReference>
<dbReference type="PROSITE" id="PS51273">
    <property type="entry name" value="GATASE_TYPE_1"/>
    <property type="match status" value="1"/>
</dbReference>
<protein>
    <recommendedName>
        <fullName>Imidazole glycerol phosphate synthase hisHF</fullName>
        <shortName>IGP synthase</shortName>
        <shortName>IGPS</shortName>
        <shortName>ImGP synthase</shortName>
        <ecNumber>4.3.2.10</ecNumber>
    </recommendedName>
    <domain>
        <recommendedName>
            <fullName>Glutaminase</fullName>
            <ecNumber>3.5.1.2</ecNumber>
        </recommendedName>
    </domain>
    <domain>
        <recommendedName>
            <fullName>Cyclase</fullName>
        </recommendedName>
    </domain>
</protein>
<evidence type="ECO:0000250" key="1"/>
<evidence type="ECO:0000255" key="2"/>
<evidence type="ECO:0000305" key="3"/>
<reference key="1">
    <citation type="journal article" date="2002" name="Nature">
        <title>The genome sequence of Schizosaccharomyces pombe.</title>
        <authorList>
            <person name="Wood V."/>
            <person name="Gwilliam R."/>
            <person name="Rajandream M.A."/>
            <person name="Lyne M.H."/>
            <person name="Lyne R."/>
            <person name="Stewart A."/>
            <person name="Sgouros J.G."/>
            <person name="Peat N."/>
            <person name="Hayles J."/>
            <person name="Baker S.G."/>
            <person name="Basham D."/>
            <person name="Bowman S."/>
            <person name="Brooks K."/>
            <person name="Brown D."/>
            <person name="Brown S."/>
            <person name="Chillingworth T."/>
            <person name="Churcher C.M."/>
            <person name="Collins M."/>
            <person name="Connor R."/>
            <person name="Cronin A."/>
            <person name="Davis P."/>
            <person name="Feltwell T."/>
            <person name="Fraser A."/>
            <person name="Gentles S."/>
            <person name="Goble A."/>
            <person name="Hamlin N."/>
            <person name="Harris D.E."/>
            <person name="Hidalgo J."/>
            <person name="Hodgson G."/>
            <person name="Holroyd S."/>
            <person name="Hornsby T."/>
            <person name="Howarth S."/>
            <person name="Huckle E.J."/>
            <person name="Hunt S."/>
            <person name="Jagels K."/>
            <person name="James K.D."/>
            <person name="Jones L."/>
            <person name="Jones M."/>
            <person name="Leather S."/>
            <person name="McDonald S."/>
            <person name="McLean J."/>
            <person name="Mooney P."/>
            <person name="Moule S."/>
            <person name="Mungall K.L."/>
            <person name="Murphy L.D."/>
            <person name="Niblett D."/>
            <person name="Odell C."/>
            <person name="Oliver K."/>
            <person name="O'Neil S."/>
            <person name="Pearson D."/>
            <person name="Quail M.A."/>
            <person name="Rabbinowitsch E."/>
            <person name="Rutherford K.M."/>
            <person name="Rutter S."/>
            <person name="Saunders D."/>
            <person name="Seeger K."/>
            <person name="Sharp S."/>
            <person name="Skelton J."/>
            <person name="Simmonds M.N."/>
            <person name="Squares R."/>
            <person name="Squares S."/>
            <person name="Stevens K."/>
            <person name="Taylor K."/>
            <person name="Taylor R.G."/>
            <person name="Tivey A."/>
            <person name="Walsh S.V."/>
            <person name="Warren T."/>
            <person name="Whitehead S."/>
            <person name="Woodward J.R."/>
            <person name="Volckaert G."/>
            <person name="Aert R."/>
            <person name="Robben J."/>
            <person name="Grymonprez B."/>
            <person name="Weltjens I."/>
            <person name="Vanstreels E."/>
            <person name="Rieger M."/>
            <person name="Schaefer M."/>
            <person name="Mueller-Auer S."/>
            <person name="Gabel C."/>
            <person name="Fuchs M."/>
            <person name="Duesterhoeft A."/>
            <person name="Fritzc C."/>
            <person name="Holzer E."/>
            <person name="Moestl D."/>
            <person name="Hilbert H."/>
            <person name="Borzym K."/>
            <person name="Langer I."/>
            <person name="Beck A."/>
            <person name="Lehrach H."/>
            <person name="Reinhardt R."/>
            <person name="Pohl T.M."/>
            <person name="Eger P."/>
            <person name="Zimmermann W."/>
            <person name="Wedler H."/>
            <person name="Wambutt R."/>
            <person name="Purnelle B."/>
            <person name="Goffeau A."/>
            <person name="Cadieu E."/>
            <person name="Dreano S."/>
            <person name="Gloux S."/>
            <person name="Lelaure V."/>
            <person name="Mottier S."/>
            <person name="Galibert F."/>
            <person name="Aves S.J."/>
            <person name="Xiang Z."/>
            <person name="Hunt C."/>
            <person name="Moore K."/>
            <person name="Hurst S.M."/>
            <person name="Lucas M."/>
            <person name="Rochet M."/>
            <person name="Gaillardin C."/>
            <person name="Tallada V.A."/>
            <person name="Garzon A."/>
            <person name="Thode G."/>
            <person name="Daga R.R."/>
            <person name="Cruzado L."/>
            <person name="Jimenez J."/>
            <person name="Sanchez M."/>
            <person name="del Rey F."/>
            <person name="Benito J."/>
            <person name="Dominguez A."/>
            <person name="Revuelta J.L."/>
            <person name="Moreno S."/>
            <person name="Armstrong J."/>
            <person name="Forsburg S.L."/>
            <person name="Cerutti L."/>
            <person name="Lowe T."/>
            <person name="McCombie W.R."/>
            <person name="Paulsen I."/>
            <person name="Potashkin J."/>
            <person name="Shpakovski G.V."/>
            <person name="Ussery D."/>
            <person name="Barrell B.G."/>
            <person name="Nurse P."/>
        </authorList>
    </citation>
    <scope>NUCLEOTIDE SEQUENCE [LARGE SCALE GENOMIC DNA]</scope>
    <source>
        <strain>972 / ATCC 24843</strain>
    </source>
</reference>
<organism>
    <name type="scientific">Schizosaccharomyces pombe (strain 972 / ATCC 24843)</name>
    <name type="common">Fission yeast</name>
    <dbReference type="NCBI Taxonomy" id="284812"/>
    <lineage>
        <taxon>Eukaryota</taxon>
        <taxon>Fungi</taxon>
        <taxon>Dikarya</taxon>
        <taxon>Ascomycota</taxon>
        <taxon>Taphrinomycotina</taxon>
        <taxon>Schizosaccharomycetes</taxon>
        <taxon>Schizosaccharomycetales</taxon>
        <taxon>Schizosaccharomycetaceae</taxon>
        <taxon>Schizosaccharomyces</taxon>
    </lineage>
</organism>
<name>HIS5_SCHPO</name>
<accession>O94303</accession>
<accession>Q9Y7X3</accession>